<name>RL2_DICT6</name>
<accession>B5YDU6</accession>
<feature type="chain" id="PRO_1000141541" description="Large ribosomal subunit protein uL2">
    <location>
        <begin position="1"/>
        <end position="280"/>
    </location>
</feature>
<feature type="region of interest" description="Disordered" evidence="2">
    <location>
        <begin position="215"/>
        <end position="280"/>
    </location>
</feature>
<reference key="1">
    <citation type="journal article" date="2014" name="Genome Announc.">
        <title>Complete Genome Sequence of the Extreme Thermophile Dictyoglomus thermophilum H-6-12.</title>
        <authorList>
            <person name="Coil D.A."/>
            <person name="Badger J.H."/>
            <person name="Forberger H.C."/>
            <person name="Riggs F."/>
            <person name="Madupu R."/>
            <person name="Fedorova N."/>
            <person name="Ward N."/>
            <person name="Robb F.T."/>
            <person name="Eisen J.A."/>
        </authorList>
    </citation>
    <scope>NUCLEOTIDE SEQUENCE [LARGE SCALE GENOMIC DNA]</scope>
    <source>
        <strain>ATCC 35947 / DSM 3960 / H-6-12</strain>
    </source>
</reference>
<gene>
    <name evidence="1" type="primary">rplB</name>
    <name type="ordered locus">DICTH_0840</name>
</gene>
<evidence type="ECO:0000255" key="1">
    <source>
        <dbReference type="HAMAP-Rule" id="MF_01320"/>
    </source>
</evidence>
<evidence type="ECO:0000256" key="2">
    <source>
        <dbReference type="SAM" id="MobiDB-lite"/>
    </source>
</evidence>
<evidence type="ECO:0000305" key="3"/>
<sequence>MGLKKFKPITPGLRHLILPDFSEITKEEPEKSLLKPLKKSGGRNNFGHVTSRFRGGGHKRLYRIIDFRRDKDNIPAKVASIEYDPNRTARIALLHYADGEKRYIIAPEGLKVGDIIMSGENVDIKIGNNLPLKNIPDGTLIHNLELYPGRGGQLVRAAGTAAQILGKEGKWAYVRLPSGEIRLFDLNCRATIGQVSNVDHQNVSLGKAGRSRWLGRRPHVRGSAMNPVDHPHGGGEGKAPIGHPSPLTPWGKPTLGYKTRKKRKPSDRFIIQRANDKKEK</sequence>
<proteinExistence type="inferred from homology"/>
<organism>
    <name type="scientific">Dictyoglomus thermophilum (strain ATCC 35947 / DSM 3960 / H-6-12)</name>
    <dbReference type="NCBI Taxonomy" id="309799"/>
    <lineage>
        <taxon>Bacteria</taxon>
        <taxon>Pseudomonadati</taxon>
        <taxon>Dictyoglomota</taxon>
        <taxon>Dictyoglomia</taxon>
        <taxon>Dictyoglomales</taxon>
        <taxon>Dictyoglomaceae</taxon>
        <taxon>Dictyoglomus</taxon>
    </lineage>
</organism>
<comment type="function">
    <text evidence="1">One of the primary rRNA binding proteins. Required for association of the 30S and 50S subunits to form the 70S ribosome, for tRNA binding and peptide bond formation. It has been suggested to have peptidyltransferase activity; this is somewhat controversial. Makes several contacts with the 16S rRNA in the 70S ribosome.</text>
</comment>
<comment type="subunit">
    <text evidence="1">Part of the 50S ribosomal subunit. Forms a bridge to the 30S subunit in the 70S ribosome.</text>
</comment>
<comment type="similarity">
    <text evidence="1">Belongs to the universal ribosomal protein uL2 family.</text>
</comment>
<keyword id="KW-0687">Ribonucleoprotein</keyword>
<keyword id="KW-0689">Ribosomal protein</keyword>
<keyword id="KW-0694">RNA-binding</keyword>
<keyword id="KW-0699">rRNA-binding</keyword>
<dbReference type="EMBL" id="CP001146">
    <property type="protein sequence ID" value="ACI19061.1"/>
    <property type="molecule type" value="Genomic_DNA"/>
</dbReference>
<dbReference type="RefSeq" id="WP_012547693.1">
    <property type="nucleotide sequence ID" value="NC_011297.1"/>
</dbReference>
<dbReference type="SMR" id="B5YDU6"/>
<dbReference type="STRING" id="309799.DICTH_0840"/>
<dbReference type="PaxDb" id="309799-DICTH_0840"/>
<dbReference type="KEGG" id="dth:DICTH_0840"/>
<dbReference type="eggNOG" id="COG0090">
    <property type="taxonomic scope" value="Bacteria"/>
</dbReference>
<dbReference type="HOGENOM" id="CLU_036235_2_1_0"/>
<dbReference type="OrthoDB" id="9778722at2"/>
<dbReference type="Proteomes" id="UP000001733">
    <property type="component" value="Chromosome"/>
</dbReference>
<dbReference type="GO" id="GO:0015934">
    <property type="term" value="C:large ribosomal subunit"/>
    <property type="evidence" value="ECO:0007669"/>
    <property type="project" value="InterPro"/>
</dbReference>
<dbReference type="GO" id="GO:0019843">
    <property type="term" value="F:rRNA binding"/>
    <property type="evidence" value="ECO:0007669"/>
    <property type="project" value="UniProtKB-UniRule"/>
</dbReference>
<dbReference type="GO" id="GO:0003735">
    <property type="term" value="F:structural constituent of ribosome"/>
    <property type="evidence" value="ECO:0007669"/>
    <property type="project" value="InterPro"/>
</dbReference>
<dbReference type="GO" id="GO:0016740">
    <property type="term" value="F:transferase activity"/>
    <property type="evidence" value="ECO:0007669"/>
    <property type="project" value="InterPro"/>
</dbReference>
<dbReference type="GO" id="GO:0002181">
    <property type="term" value="P:cytoplasmic translation"/>
    <property type="evidence" value="ECO:0007669"/>
    <property type="project" value="TreeGrafter"/>
</dbReference>
<dbReference type="FunFam" id="2.30.30.30:FF:000001">
    <property type="entry name" value="50S ribosomal protein L2"/>
    <property type="match status" value="1"/>
</dbReference>
<dbReference type="FunFam" id="2.40.50.140:FF:000003">
    <property type="entry name" value="50S ribosomal protein L2"/>
    <property type="match status" value="1"/>
</dbReference>
<dbReference type="FunFam" id="4.10.950.10:FF:000001">
    <property type="entry name" value="50S ribosomal protein L2"/>
    <property type="match status" value="1"/>
</dbReference>
<dbReference type="Gene3D" id="2.30.30.30">
    <property type="match status" value="1"/>
</dbReference>
<dbReference type="Gene3D" id="2.40.50.140">
    <property type="entry name" value="Nucleic acid-binding proteins"/>
    <property type="match status" value="1"/>
</dbReference>
<dbReference type="Gene3D" id="4.10.950.10">
    <property type="entry name" value="Ribosomal protein L2, domain 3"/>
    <property type="match status" value="1"/>
</dbReference>
<dbReference type="HAMAP" id="MF_01320_B">
    <property type="entry name" value="Ribosomal_uL2_B"/>
    <property type="match status" value="1"/>
</dbReference>
<dbReference type="InterPro" id="IPR012340">
    <property type="entry name" value="NA-bd_OB-fold"/>
</dbReference>
<dbReference type="InterPro" id="IPR014722">
    <property type="entry name" value="Rib_uL2_dom2"/>
</dbReference>
<dbReference type="InterPro" id="IPR002171">
    <property type="entry name" value="Ribosomal_uL2"/>
</dbReference>
<dbReference type="InterPro" id="IPR005880">
    <property type="entry name" value="Ribosomal_uL2_bac/org-type"/>
</dbReference>
<dbReference type="InterPro" id="IPR022669">
    <property type="entry name" value="Ribosomal_uL2_C"/>
</dbReference>
<dbReference type="InterPro" id="IPR022671">
    <property type="entry name" value="Ribosomal_uL2_CS"/>
</dbReference>
<dbReference type="InterPro" id="IPR014726">
    <property type="entry name" value="Ribosomal_uL2_dom3"/>
</dbReference>
<dbReference type="InterPro" id="IPR022666">
    <property type="entry name" value="Ribosomal_uL2_RNA-bd_dom"/>
</dbReference>
<dbReference type="InterPro" id="IPR008991">
    <property type="entry name" value="Translation_prot_SH3-like_sf"/>
</dbReference>
<dbReference type="NCBIfam" id="TIGR01171">
    <property type="entry name" value="rplB_bact"/>
    <property type="match status" value="1"/>
</dbReference>
<dbReference type="PANTHER" id="PTHR13691:SF5">
    <property type="entry name" value="LARGE RIBOSOMAL SUBUNIT PROTEIN UL2M"/>
    <property type="match status" value="1"/>
</dbReference>
<dbReference type="PANTHER" id="PTHR13691">
    <property type="entry name" value="RIBOSOMAL PROTEIN L2"/>
    <property type="match status" value="1"/>
</dbReference>
<dbReference type="Pfam" id="PF00181">
    <property type="entry name" value="Ribosomal_L2"/>
    <property type="match status" value="1"/>
</dbReference>
<dbReference type="Pfam" id="PF03947">
    <property type="entry name" value="Ribosomal_L2_C"/>
    <property type="match status" value="1"/>
</dbReference>
<dbReference type="PIRSF" id="PIRSF002158">
    <property type="entry name" value="Ribosomal_L2"/>
    <property type="match status" value="1"/>
</dbReference>
<dbReference type="SMART" id="SM01383">
    <property type="entry name" value="Ribosomal_L2"/>
    <property type="match status" value="1"/>
</dbReference>
<dbReference type="SMART" id="SM01382">
    <property type="entry name" value="Ribosomal_L2_C"/>
    <property type="match status" value="1"/>
</dbReference>
<dbReference type="SUPFAM" id="SSF50249">
    <property type="entry name" value="Nucleic acid-binding proteins"/>
    <property type="match status" value="1"/>
</dbReference>
<dbReference type="SUPFAM" id="SSF50104">
    <property type="entry name" value="Translation proteins SH3-like domain"/>
    <property type="match status" value="1"/>
</dbReference>
<dbReference type="PROSITE" id="PS00467">
    <property type="entry name" value="RIBOSOMAL_L2"/>
    <property type="match status" value="1"/>
</dbReference>
<protein>
    <recommendedName>
        <fullName evidence="1">Large ribosomal subunit protein uL2</fullName>
    </recommendedName>
    <alternativeName>
        <fullName evidence="3">50S ribosomal protein L2</fullName>
    </alternativeName>
</protein>